<feature type="chain" id="PRO_0000076158" description="Putative lon protease homolog">
    <location>
        <begin position="1"/>
        <end position="495"/>
    </location>
</feature>
<feature type="region of interest" description="Disordered" evidence="2">
    <location>
        <begin position="471"/>
        <end position="495"/>
    </location>
</feature>
<feature type="compositionally biased region" description="Polar residues" evidence="2">
    <location>
        <begin position="472"/>
        <end position="486"/>
    </location>
</feature>
<feature type="binding site" evidence="1">
    <location>
        <begin position="52"/>
        <end position="59"/>
    </location>
    <ligand>
        <name>ATP</name>
        <dbReference type="ChEBI" id="CHEBI:30616"/>
    </ligand>
</feature>
<proteinExistence type="inferred from homology"/>
<keyword id="KW-0067">ATP-binding</keyword>
<keyword id="KW-0378">Hydrolase</keyword>
<keyword id="KW-0547">Nucleotide-binding</keyword>
<keyword id="KW-0645">Protease</keyword>
<keyword id="KW-0720">Serine protease</keyword>
<accession>P58275</accession>
<dbReference type="EC" id="3.4.21.-"/>
<dbReference type="EMBL" id="BA000011">
    <property type="protein sequence ID" value="BAB59298.1"/>
    <property type="molecule type" value="Genomic_DNA"/>
</dbReference>
<dbReference type="RefSeq" id="WP_010916411.1">
    <property type="nucleotide sequence ID" value="NC_002689.2"/>
</dbReference>
<dbReference type="SMR" id="P58275"/>
<dbReference type="STRING" id="273116.gene:9380926"/>
<dbReference type="PaxDb" id="273116-14324370"/>
<dbReference type="GeneID" id="1441641"/>
<dbReference type="KEGG" id="tvo:TVG0165728"/>
<dbReference type="eggNOG" id="arCOG02162">
    <property type="taxonomic scope" value="Archaea"/>
</dbReference>
<dbReference type="HOGENOM" id="CLU_550564_0_0_2"/>
<dbReference type="OrthoDB" id="64652at2157"/>
<dbReference type="PhylomeDB" id="P58275"/>
<dbReference type="Proteomes" id="UP000001017">
    <property type="component" value="Chromosome"/>
</dbReference>
<dbReference type="GO" id="GO:0005524">
    <property type="term" value="F:ATP binding"/>
    <property type="evidence" value="ECO:0007669"/>
    <property type="project" value="UniProtKB-KW"/>
</dbReference>
<dbReference type="GO" id="GO:0016887">
    <property type="term" value="F:ATP hydrolysis activity"/>
    <property type="evidence" value="ECO:0007669"/>
    <property type="project" value="InterPro"/>
</dbReference>
<dbReference type="GO" id="GO:0008236">
    <property type="term" value="F:serine-type peptidase activity"/>
    <property type="evidence" value="ECO:0007669"/>
    <property type="project" value="UniProtKB-KW"/>
</dbReference>
<dbReference type="GO" id="GO:0006508">
    <property type="term" value="P:proteolysis"/>
    <property type="evidence" value="ECO:0007669"/>
    <property type="project" value="UniProtKB-KW"/>
</dbReference>
<dbReference type="GO" id="GO:0006355">
    <property type="term" value="P:regulation of DNA-templated transcription"/>
    <property type="evidence" value="ECO:0007669"/>
    <property type="project" value="InterPro"/>
</dbReference>
<dbReference type="CDD" id="cd00009">
    <property type="entry name" value="AAA"/>
    <property type="match status" value="1"/>
</dbReference>
<dbReference type="CDD" id="cd00350">
    <property type="entry name" value="rubredoxin_like"/>
    <property type="match status" value="1"/>
</dbReference>
<dbReference type="Gene3D" id="1.10.8.60">
    <property type="match status" value="1"/>
</dbReference>
<dbReference type="Gene3D" id="3.40.50.300">
    <property type="entry name" value="P-loop containing nucleotide triphosphate hydrolases"/>
    <property type="match status" value="2"/>
</dbReference>
<dbReference type="InterPro" id="IPR003593">
    <property type="entry name" value="AAA+_ATPase"/>
</dbReference>
<dbReference type="InterPro" id="IPR050764">
    <property type="entry name" value="CbbQ/NirQ/NorQ/GpvN"/>
</dbReference>
<dbReference type="InterPro" id="IPR000523">
    <property type="entry name" value="Mg_chelatse_chII-like_cat_dom"/>
</dbReference>
<dbReference type="InterPro" id="IPR027417">
    <property type="entry name" value="P-loop_NTPase"/>
</dbReference>
<dbReference type="InterPro" id="IPR002078">
    <property type="entry name" value="Sigma_54_int"/>
</dbReference>
<dbReference type="PANTHER" id="PTHR42759:SF1">
    <property type="entry name" value="MAGNESIUM-CHELATASE SUBUNIT CHLD"/>
    <property type="match status" value="1"/>
</dbReference>
<dbReference type="PANTHER" id="PTHR42759">
    <property type="entry name" value="MOXR FAMILY PROTEIN"/>
    <property type="match status" value="1"/>
</dbReference>
<dbReference type="Pfam" id="PF01078">
    <property type="entry name" value="Mg_chelatase"/>
    <property type="match status" value="1"/>
</dbReference>
<dbReference type="Pfam" id="PF00158">
    <property type="entry name" value="Sigma54_activat"/>
    <property type="match status" value="1"/>
</dbReference>
<dbReference type="SMART" id="SM00382">
    <property type="entry name" value="AAA"/>
    <property type="match status" value="1"/>
</dbReference>
<dbReference type="SUPFAM" id="SSF52540">
    <property type="entry name" value="P-loop containing nucleoside triphosphate hydrolases"/>
    <property type="match status" value="1"/>
</dbReference>
<sequence>MGSVYVNFFEEYPDTSYIKIPNNPLDRVIGQDEAVRIASVAARQRRHLLLVGPPGVGKSMIAQALSFYIGRPNEEIRVVHNPQYPERPFVEIKTREEVMLEREEESSTSGTLIDPKDAPTSVAERLGYRCSKCGFYSSPTEMVCPNCNSPKAQIGTQGPFGDVFNVIGAAFGVQNNVDKVTLTRRNGDHDEIVVYERYNDKIRVLDEKTLERRRRLEKKSPSKTIVPIDRNPFVLATGASETELLGDVRHDPYGGHPQLGTLPYERVIAGAVHEAHEGVLFIDEITHLGNLQRYILTAMQEKVFPITGRNPQSAGASVRVDKVPADFILVAACNINDLPYILSPLRSRIVGNGYEILMKTTMKDTEENRMKYLQFIAQEINMDGKIPHMTMDAAQLIIEEGRKRAKLIDRKNNELTLRLRELGGLIRAAGDIAVFKGNKLIDKEDVEEAIKLYVPVEEKIMKEYGSMAAAYSSETTGSQRDSTYNYANMDDRSYE</sequence>
<comment type="similarity">
    <text evidence="3">Belongs to the peptidase S16 family.</text>
</comment>
<comment type="caution">
    <text evidence="3">Lacks the conserved Ser-Lys catalytic dyad essential for proteolytic activity. Its enzyme activity is therefore unsure.</text>
</comment>
<organism>
    <name type="scientific">Thermoplasma volcanium (strain ATCC 51530 / DSM 4299 / JCM 9571 / NBRC 15438 / GSS1)</name>
    <dbReference type="NCBI Taxonomy" id="273116"/>
    <lineage>
        <taxon>Archaea</taxon>
        <taxon>Methanobacteriati</taxon>
        <taxon>Thermoplasmatota</taxon>
        <taxon>Thermoplasmata</taxon>
        <taxon>Thermoplasmatales</taxon>
        <taxon>Thermoplasmataceae</taxon>
        <taxon>Thermoplasma</taxon>
    </lineage>
</organism>
<reference key="1">
    <citation type="journal article" date="2000" name="Proc. Natl. Acad. Sci. U.S.A.">
        <title>Archaeal adaptation to higher temperatures revealed by genomic sequence of Thermoplasma volcanium.</title>
        <authorList>
            <person name="Kawashima T."/>
            <person name="Amano N."/>
            <person name="Koike H."/>
            <person name="Makino S."/>
            <person name="Higuchi S."/>
            <person name="Kawashima-Ohya Y."/>
            <person name="Watanabe K."/>
            <person name="Yamazaki M."/>
            <person name="Kanehori K."/>
            <person name="Kawamoto T."/>
            <person name="Nunoshiba T."/>
            <person name="Yamamoto Y."/>
            <person name="Aramaki H."/>
            <person name="Makino K."/>
            <person name="Suzuki M."/>
        </authorList>
    </citation>
    <scope>NUCLEOTIDE SEQUENCE [LARGE SCALE GENOMIC DNA]</scope>
    <source>
        <strain>ATCC 51530 / DSM 4299 / JCM 9571 / NBRC 15438 / GSS1</strain>
    </source>
</reference>
<evidence type="ECO:0000255" key="1"/>
<evidence type="ECO:0000256" key="2">
    <source>
        <dbReference type="SAM" id="MobiDB-lite"/>
    </source>
</evidence>
<evidence type="ECO:0000305" key="3"/>
<gene>
    <name type="ordered locus">TV0156</name>
    <name type="ORF">TVG0165728</name>
</gene>
<name>LONH_THEVO</name>
<protein>
    <recommendedName>
        <fullName>Putative lon protease homolog</fullName>
        <ecNumber>3.4.21.-</ecNumber>
    </recommendedName>
    <alternativeName>
        <fullName>ATP-dependent protease La homolog</fullName>
    </alternativeName>
</protein>